<gene>
    <name type="primary">N</name>
</gene>
<name>NCAP_NIPAV</name>
<feature type="chain" id="PRO_0000235999" description="Nucleoprotein">
    <location>
        <begin position="1"/>
        <end position="532"/>
    </location>
</feature>
<feature type="region of interest" description="Ncore" evidence="3">
    <location>
        <begin position="1"/>
        <end position="402"/>
    </location>
</feature>
<feature type="region of interest" description="Ntail" evidence="3">
    <location>
        <begin position="403"/>
        <end position="532"/>
    </location>
</feature>
<feature type="region of interest" description="Disordered" evidence="5">
    <location>
        <begin position="422"/>
        <end position="444"/>
    </location>
</feature>
<feature type="region of interest" description="Disordered" evidence="5">
    <location>
        <begin position="487"/>
        <end position="532"/>
    </location>
</feature>
<feature type="compositionally biased region" description="Acidic residues" evidence="5">
    <location>
        <begin position="427"/>
        <end position="436"/>
    </location>
</feature>
<feature type="compositionally biased region" description="Low complexity" evidence="5">
    <location>
        <begin position="487"/>
        <end position="497"/>
    </location>
</feature>
<feature type="binding site" evidence="10">
    <location>
        <position position="178"/>
    </location>
    <ligand>
        <name>RNA</name>
        <dbReference type="ChEBI" id="CHEBI:33697"/>
    </ligand>
</feature>
<feature type="binding site" evidence="10">
    <location>
        <position position="193"/>
    </location>
    <ligand>
        <name>RNA</name>
        <dbReference type="ChEBI" id="CHEBI:33697"/>
    </ligand>
</feature>
<feature type="binding site" evidence="10">
    <location>
        <position position="258"/>
    </location>
    <ligand>
        <name>RNA</name>
        <dbReference type="ChEBI" id="CHEBI:33697"/>
    </ligand>
</feature>
<feature type="binding site" evidence="10">
    <location>
        <position position="352"/>
    </location>
    <ligand>
        <name>RNA</name>
        <dbReference type="ChEBI" id="CHEBI:33697"/>
    </ligand>
</feature>
<feature type="sequence variant" description="In strain: Isolate Malaysian flying-fox.">
    <original>T</original>
    <variation>I</variation>
    <location>
        <position position="30"/>
    </location>
</feature>
<feature type="sequence variant" description="In strain: Isolate NiV/MY/99/VRI-0626.">
    <original>S</original>
    <variation>R</variation>
    <location>
        <position position="139"/>
    </location>
</feature>
<feature type="sequence variant" description="In strain: Isolate NiV/MY/99/VRI-0626.">
    <original>M</original>
    <variation>I</variation>
    <location>
        <position position="345"/>
    </location>
</feature>
<feature type="sequence variant" description="In strain: Isolate NiV/KHM/CSUR381.">
    <original>I</original>
    <variation>V</variation>
    <location>
        <position position="429"/>
    </location>
</feature>
<feature type="sequence variant" description="In strain: Isolate NiV/KHM/CSUR381.">
    <original>G</original>
    <variation>E</variation>
    <location>
        <position position="432"/>
    </location>
</feature>
<feature type="sequence variant" description="In strain: Isolate NiV/KHM/CSUR381.">
    <original>N</original>
    <variation>D</variation>
    <location>
        <position position="457"/>
    </location>
</feature>
<feature type="sequence variant" description="In strain: Isolate NiV/KHM/CSUR381.">
    <original>I</original>
    <variation>T</variation>
    <location>
        <position position="502"/>
    </location>
</feature>
<feature type="sequence variant" description="In strain: Isolate NiV/KHM/CSUR381.">
    <original>E</original>
    <variation>G</variation>
    <location>
        <position position="511"/>
    </location>
</feature>
<feature type="sequence variant" description="In strain: Isolate NiV/KHM/CSUR381.">
    <original>L</original>
    <variation>P</variation>
    <location>
        <position position="518"/>
    </location>
</feature>
<feature type="sequence variant" description="In strain: Isolate NiV/KHM/CSUR381.">
    <original>A</original>
    <variation>T</variation>
    <location>
        <position position="521"/>
    </location>
</feature>
<feature type="helix" evidence="16">
    <location>
        <begin position="5"/>
        <end position="17"/>
    </location>
</feature>
<feature type="strand" evidence="16">
    <location>
        <begin position="18"/>
        <end position="20"/>
    </location>
</feature>
<feature type="helix" evidence="16">
    <location>
        <begin position="26"/>
        <end position="28"/>
    </location>
</feature>
<feature type="strand" evidence="15">
    <location>
        <begin position="34"/>
        <end position="42"/>
    </location>
</feature>
<feature type="helix" evidence="15">
    <location>
        <begin position="45"/>
        <end position="59"/>
    </location>
</feature>
<feature type="helix" evidence="15">
    <location>
        <begin position="66"/>
        <end position="78"/>
    </location>
</feature>
<feature type="strand" evidence="15">
    <location>
        <begin position="81"/>
        <end position="83"/>
    </location>
</feature>
<feature type="helix" evidence="15">
    <location>
        <begin position="84"/>
        <end position="91"/>
    </location>
</feature>
<feature type="strand" evidence="15">
    <location>
        <begin position="98"/>
        <end position="104"/>
    </location>
</feature>
<feature type="helix" evidence="16">
    <location>
        <begin position="105"/>
        <end position="107"/>
    </location>
</feature>
<feature type="strand" evidence="16">
    <location>
        <begin position="109"/>
        <end position="112"/>
    </location>
</feature>
<feature type="helix" evidence="15">
    <location>
        <begin position="123"/>
        <end position="138"/>
    </location>
</feature>
<feature type="strand" evidence="15">
    <location>
        <begin position="139"/>
        <end position="141"/>
    </location>
</feature>
<feature type="strand" evidence="15">
    <location>
        <begin position="144"/>
        <end position="147"/>
    </location>
</feature>
<feature type="helix" evidence="15">
    <location>
        <begin position="149"/>
        <end position="152"/>
    </location>
</feature>
<feature type="helix" evidence="15">
    <location>
        <begin position="158"/>
        <end position="180"/>
    </location>
</feature>
<feature type="strand" evidence="16">
    <location>
        <begin position="183"/>
        <end position="185"/>
    </location>
</feature>
<feature type="helix" evidence="15">
    <location>
        <begin position="192"/>
        <end position="199"/>
    </location>
</feature>
<feature type="helix" evidence="15">
    <location>
        <begin position="205"/>
        <end position="207"/>
    </location>
</feature>
<feature type="helix" evidence="15">
    <location>
        <begin position="211"/>
        <end position="223"/>
    </location>
</feature>
<feature type="helix" evidence="15">
    <location>
        <begin position="225"/>
        <end position="240"/>
    </location>
</feature>
<feature type="strand" evidence="16">
    <location>
        <begin position="241"/>
        <end position="243"/>
    </location>
</feature>
<feature type="helix" evidence="15">
    <location>
        <begin position="246"/>
        <end position="263"/>
    </location>
</feature>
<feature type="helix" evidence="15">
    <location>
        <begin position="265"/>
        <end position="274"/>
    </location>
</feature>
<feature type="turn" evidence="15">
    <location>
        <begin position="275"/>
        <end position="277"/>
    </location>
</feature>
<feature type="helix" evidence="15">
    <location>
        <begin position="280"/>
        <end position="283"/>
    </location>
</feature>
<feature type="helix" evidence="15">
    <location>
        <begin position="285"/>
        <end position="287"/>
    </location>
</feature>
<feature type="helix" evidence="15">
    <location>
        <begin position="288"/>
        <end position="304"/>
    </location>
</feature>
<feature type="helix" evidence="15">
    <location>
        <begin position="305"/>
        <end position="313"/>
    </location>
</feature>
<feature type="helix" evidence="15">
    <location>
        <begin position="316"/>
        <end position="318"/>
    </location>
</feature>
<feature type="turn" evidence="15">
    <location>
        <begin position="319"/>
        <end position="322"/>
    </location>
</feature>
<feature type="helix" evidence="15">
    <location>
        <begin position="324"/>
        <end position="326"/>
    </location>
</feature>
<feature type="helix" evidence="15">
    <location>
        <begin position="328"/>
        <end position="341"/>
    </location>
</feature>
<feature type="helix" evidence="15">
    <location>
        <begin position="346"/>
        <end position="349"/>
    </location>
</feature>
<feature type="helix" evidence="15">
    <location>
        <begin position="357"/>
        <end position="369"/>
    </location>
</feature>
<feature type="turn" evidence="16">
    <location>
        <begin position="372"/>
        <end position="374"/>
    </location>
</feature>
<feature type="turn" evidence="16">
    <location>
        <begin position="380"/>
        <end position="382"/>
    </location>
</feature>
<feature type="helix" evidence="16">
    <location>
        <begin position="386"/>
        <end position="395"/>
    </location>
</feature>
<feature type="helix" evidence="17">
    <location>
        <begin position="471"/>
        <end position="490"/>
    </location>
</feature>
<proteinExistence type="evidence at protein level"/>
<accession>Q9IK92</accession>
<accession>Q4KTA9</accession>
<accession>Q5K4E2</accession>
<accession>Q8QU03</accession>
<organismHost>
    <name type="scientific">Cynopterus brachyotis</name>
    <name type="common">Lesser short-nosed fruit bat</name>
    <name type="synonym">Pachysoma brachyotis</name>
    <dbReference type="NCBI Taxonomy" id="58060"/>
</organismHost>
<organismHost>
    <name type="scientific">Eonycteris spelaea</name>
    <name type="common">Lesser dawn bat</name>
    <name type="synonym">Macroglossus spelaeus</name>
    <dbReference type="NCBI Taxonomy" id="58065"/>
</organismHost>
<organismHost>
    <name type="scientific">Homo sapiens</name>
    <name type="common">Human</name>
    <dbReference type="NCBI Taxonomy" id="9606"/>
</organismHost>
<organismHost>
    <name type="scientific">Pteropus hypomelanus</name>
    <name type="common">Island flying fox</name>
    <name type="synonym">Variable flying fox</name>
    <dbReference type="NCBI Taxonomy" id="9405"/>
</organismHost>
<organismHost>
    <name type="scientific">Pteropus vampyrus</name>
    <name type="common">Large flying fox</name>
    <dbReference type="NCBI Taxonomy" id="132908"/>
</organismHost>
<organismHost>
    <name type="scientific">Scotophilus kuhlii</name>
    <name type="common">Lesser asiatic yellow bat</name>
    <dbReference type="NCBI Taxonomy" id="153297"/>
</organismHost>
<organismHost>
    <name type="scientific">Sus scrofa</name>
    <name type="common">Pig</name>
    <dbReference type="NCBI Taxonomy" id="9823"/>
</organismHost>
<protein>
    <recommendedName>
        <fullName>Nucleoprotein</fullName>
        <shortName>Protein N</shortName>
    </recommendedName>
    <alternativeName>
        <fullName>Nucleocapsid protein</fullName>
    </alternativeName>
</protein>
<reference key="1">
    <citation type="journal article" date="2000" name="Science">
        <title>Nipah virus: a recently emergent deadly paramyxovirus.</title>
        <authorList>
            <person name="Chua K.B."/>
            <person name="Bellini W.J."/>
            <person name="Rota P.A."/>
            <person name="Harcourt B.H."/>
            <person name="Tamin A."/>
            <person name="Lam S.K."/>
            <person name="Ksiazek T.G."/>
            <person name="Rollin P.E."/>
            <person name="Zaki S.R."/>
            <person name="Shieh W."/>
            <person name="Goldsmith C.S."/>
            <person name="Gubler D.J."/>
            <person name="Roehrig J.T."/>
            <person name="Eaton B."/>
            <person name="Gould A.R."/>
            <person name="Olson J."/>
            <person name="Field H."/>
            <person name="Daniels P."/>
            <person name="Ling A.E."/>
            <person name="Peters C.J."/>
            <person name="Anderson L.J."/>
            <person name="Mahy B.W."/>
        </authorList>
    </citation>
    <scope>NUCLEOTIDE SEQUENCE [GENOMIC RNA]</scope>
</reference>
<reference key="2">
    <citation type="journal article" date="2001" name="J. Gen. Virol.">
        <title>Complete nucleotide sequences of Nipah virus isolates from Malaysia.</title>
        <authorList>
            <person name="Chan Y.P."/>
            <person name="Chua K.B."/>
            <person name="Koh C.L."/>
            <person name="Lim M.E."/>
            <person name="Lam S.K."/>
        </authorList>
    </citation>
    <scope>NUCLEOTIDE SEQUENCE [GENOMIC RNA]</scope>
    <source>
        <strain>Isolate UMMC1</strain>
        <strain>Isolate UMMC2</strain>
    </source>
</reference>
<reference key="3">
    <citation type="journal article" date="2002" name="Microbes Infect.">
        <title>Isolation of Nipah virus from Malaysian island flying-foxes.</title>
        <authorList>
            <person name="Chua K.B."/>
            <person name="Koh C.L."/>
            <person name="Hooi P.S."/>
            <person name="Wee K.F."/>
            <person name="Khong J.H."/>
            <person name="Chua B.H."/>
            <person name="Chan Y.P."/>
            <person name="Lim M.E."/>
            <person name="Lam S.K."/>
        </authorList>
    </citation>
    <scope>NUCLEOTIDE SEQUENCE [GENOMIC RNA]</scope>
    <source>
        <strain>Isolate Malaysian flying-fox</strain>
    </source>
</reference>
<reference key="4">
    <citation type="journal article" date="2004" name="Emerg. Infect. Dis.">
        <title>Isolation and molecular identification of Nipah virus from pigs.</title>
        <authorList>
            <person name="Abubakar S."/>
            <person name="Chang L.Y."/>
            <person name="Mohdali A.R."/>
            <person name="Sharifah S.H."/>
            <person name="Yusoff K."/>
            <person name="Zamrod Z."/>
        </authorList>
    </citation>
    <scope>NUCLEOTIDE SEQUENCE [GENOMIC RNA]</scope>
    <source>
        <strain>Isolate NiV/MY/99/UM-0128</strain>
        <strain>Isolate NiV/MY/99/VRI-1413</strain>
        <strain>Isolate NiV/MY/99/VRI-2794</strain>
    </source>
</reference>
<reference key="5">
    <citation type="journal article" date="2005" name="Emerg. Infect. Dis.">
        <title>Nipah virus in Lyle's flying foxes, Cambodia.</title>
        <authorList>
            <person name="Reynes J.-M."/>
            <person name="Counor D."/>
            <person name="Ong S."/>
            <person name="Faure C."/>
            <person name="Seng V."/>
            <person name="Molia S."/>
            <person name="Walston J."/>
            <person name="Georges-Courbot M."/>
            <person name="Deubel V."/>
            <person name="Sarthou J.-L."/>
        </authorList>
    </citation>
    <scope>NUCLEOTIDE SEQUENCE [GENOMIC RNA]</scope>
    <source>
        <strain>Isolate NiV/KHM/CSUR381</strain>
    </source>
</reference>
<reference key="6">
    <citation type="submission" date="2005-01" db="EMBL/GenBank/DDBJ databases">
        <title>Identification of a new Nipah virus strain from pigs.</title>
        <authorList>
            <person name="Abubakar S."/>
            <person name="Li-Yen C."/>
            <person name="Mohd Ali A.R."/>
            <person name="Sharifah S.H."/>
        </authorList>
    </citation>
    <scope>NUCLEOTIDE SEQUENCE [GENOMIC RNA]</scope>
    <source>
        <strain>Isolate NiV/MY/99/VRI-0626</strain>
    </source>
</reference>
<reference evidence="11" key="7">
    <citation type="journal article" date="2014" name="Nat. Struct. Mol. Biol.">
        <title>Structure of Nipah virus unassembled nucleoprotein in complex with its viral chaperone.</title>
        <authorList>
            <person name="Yabukarski F."/>
            <person name="Lawrence P."/>
            <person name="Tarbouriech N."/>
            <person name="Bourhis J.M."/>
            <person name="Delaforge E."/>
            <person name="Jensen M.R."/>
            <person name="Ruigrok R.W."/>
            <person name="Blackledge M."/>
            <person name="Volchkov V."/>
            <person name="Jamin M."/>
        </authorList>
    </citation>
    <scope>X-RAY CRYSTALLOGRAPHY (2.50 ANGSTROMS) OF 32-383 OF N0 IN COMPLEX WITH THE PHOSPHOPROTEIN</scope>
    <scope>FUNCTION</scope>
</reference>
<reference evidence="12 13" key="8">
    <citation type="journal article" date="2021" name="PLoS Pathog.">
        <title>CryoEM structure of the Nipah virus nucleocapsid assembly.</title>
        <authorList>
            <person name="Ker D.S."/>
            <person name="Jenkins H.T."/>
            <person name="Greive S.J."/>
            <person name="Antson A.A."/>
        </authorList>
    </citation>
    <scope>STRUCTURE BY ELECTRON MICROSCOPY (3.50 ANGSTROMS) IN COMPLEX WITH RNA</scope>
    <scope>FUNCTION</scope>
    <scope>DOMAIN</scope>
    <scope>RNA-BINDING</scope>
</reference>
<reference evidence="14" key="9">
    <citation type="journal article" date="2022" name="J. Mol. Biol.">
        <title>Structural Dynamics of the C-terminal X Domain of Nipah and Hendra Viruses Controls the Attachment to the C-terminal Tail of the Nucleocapsid Protein.</title>
        <authorList>
            <person name="Bourhis J.M."/>
            <person name="Yabukarski F."/>
            <person name="Communie G."/>
            <person name="Schneider R."/>
            <person name="Volchkova V.A."/>
            <person name="Freneat M."/>
            <person name="Gerard F.C."/>
            <person name="Ducournau C."/>
            <person name="Mas C."/>
            <person name="Tarbouriech N."/>
            <person name="Ringkjoebing Jensen M."/>
            <person name="Volchkov V.E."/>
            <person name="Blackledge M."/>
            <person name="Jamin M."/>
        </authorList>
    </citation>
    <scope>X-RAY CRYSTALLOGRAPHY (2.79 ANGSTROMS) OF 465-498 IN COMPLEX WITH THE PHOSPHOPROTEIN C-TERMINUS AND RNA</scope>
    <scope>INTERACTION WITH THE PHOSPHOPROTEIN</scope>
</reference>
<keyword id="KW-0002">3D-structure</keyword>
<keyword id="KW-0167">Capsid protein</keyword>
<keyword id="KW-1139">Helical capsid protein</keyword>
<keyword id="KW-1035">Host cytoplasm</keyword>
<keyword id="KW-0687">Ribonucleoprotein</keyword>
<keyword id="KW-0694">RNA-binding</keyword>
<keyword id="KW-0543">Viral nucleoprotein</keyword>
<keyword id="KW-0946">Virion</keyword>
<comment type="function">
    <text evidence="3 6 7">Forms the helical nucleocapsid (NC) in a ratio of 1 N per 6 ribonucleotides, protecting the genome from nucleases (PubMed:34270629). The nucleocapsid (NC) has a helical structure with either 13.4 N per turn, approximately 20 nm in diameter, with a hollow central cavity of 56 nm in diameter (PubMed:34270629). The encapsidated genomic RNA serves as template for transcription and replication; encapsidation by N is coupled to RNA synthesis (By similarity). Forms the encapsidation complex with the phosphoprotein protein P (By similarity). Before encapsidation, the newly synthesized free N protein, so-called N0, is chaperoned by P (PubMed:25108352).</text>
</comment>
<comment type="subunit">
    <text evidence="2 4 6 8">Homomultimer; forms the nucleocapsid (By similarity). Binds to the viral genomic RNA (By similarity). N0 interacts with the phosphoprotein (via N-terminus); this interaction allows P to chaperon N0 to avoid N polymerization before encapsidation (PubMed:25108352). Interacts (via C-terminus) as N-RNA template with the phosphoprotein (via C-terminus); this interaction positions the polymerase on the template (PubMed:35317998).</text>
</comment>
<comment type="interaction">
    <interactant intactId="EBI-16116412">
        <id>Q9IK92</id>
    </interactant>
    <interactant intactId="EBI-16116432">
        <id>Q9IK91</id>
        <label>P/V/C</label>
    </interactant>
    <organismsDiffer>false</organismsDiffer>
    <experiments>5</experiments>
</comment>
<comment type="subcellular location">
    <subcellularLocation>
        <location>Virion</location>
    </subcellularLocation>
    <subcellularLocation>
        <location evidence="1">Host cytoplasm</location>
    </subcellularLocation>
</comment>
<comment type="domain">
    <text evidence="7">Ncore is globular and carries the regions required for self-assembly and RNA-binding. Ntail is an intrinsically disordered monomeric domain in the C-terminus.</text>
</comment>
<comment type="similarity">
    <text evidence="9">Belongs to the paramyxoviruses nucleocapsid family.</text>
</comment>
<dbReference type="EMBL" id="AF212302">
    <property type="protein sequence ID" value="AAF73377.1"/>
    <property type="molecule type" value="Genomic_RNA"/>
</dbReference>
<dbReference type="EMBL" id="AY029767">
    <property type="protein sequence ID" value="AAK50540.1"/>
    <property type="molecule type" value="Genomic_RNA"/>
</dbReference>
<dbReference type="EMBL" id="AJ564621">
    <property type="protein sequence ID" value="CAD92347.1"/>
    <property type="molecule type" value="Genomic_RNA"/>
</dbReference>
<dbReference type="EMBL" id="AY029768">
    <property type="protein sequence ID" value="AAK50548.1"/>
    <property type="molecule type" value="Genomic_RNA"/>
</dbReference>
<dbReference type="EMBL" id="AJ564622">
    <property type="protein sequence ID" value="CAD92353.1"/>
    <property type="molecule type" value="Genomic_RNA"/>
</dbReference>
<dbReference type="EMBL" id="AJ564623">
    <property type="protein sequence ID" value="CAD92359.1"/>
    <property type="molecule type" value="Genomic_RNA"/>
</dbReference>
<dbReference type="EMBL" id="AF376747">
    <property type="protein sequence ID" value="AAM13401.1"/>
    <property type="molecule type" value="Genomic_RNA"/>
</dbReference>
<dbReference type="EMBL" id="AY858110">
    <property type="protein sequence ID" value="AAX51852.1"/>
    <property type="molecule type" value="Genomic_RNA"/>
</dbReference>
<dbReference type="EMBL" id="AJ627196">
    <property type="protein sequence ID" value="CAF25493.1"/>
    <property type="molecule type" value="Genomic_RNA"/>
</dbReference>
<dbReference type="RefSeq" id="NP_112021.1">
    <property type="nucleotide sequence ID" value="NC_002728.1"/>
</dbReference>
<dbReference type="PDB" id="4CO6">
    <property type="method" value="X-ray"/>
    <property type="resolution" value="2.50 A"/>
    <property type="chains" value="A/B/C=32-383"/>
</dbReference>
<dbReference type="PDB" id="7NT5">
    <property type="method" value="EM"/>
    <property type="resolution" value="3.50 A"/>
    <property type="chains" value="A/B/C/D/E/F/G/H/I/J/K/L/M=1-532"/>
</dbReference>
<dbReference type="PDB" id="7NT6">
    <property type="method" value="EM"/>
    <property type="resolution" value="4.30 A"/>
    <property type="chains" value="A/B/C/D/E/F/G/H/I/J/K/L/M/N/O=1-532"/>
</dbReference>
<dbReference type="PDB" id="7PNO">
    <property type="method" value="X-ray"/>
    <property type="resolution" value="2.79 A"/>
    <property type="chains" value="B/D/F/H/J/L/N=465-498"/>
</dbReference>
<dbReference type="PDBsum" id="4CO6"/>
<dbReference type="PDBsum" id="7NT5"/>
<dbReference type="PDBsum" id="7NT6"/>
<dbReference type="PDBsum" id="7PNO"/>
<dbReference type="EMDB" id="EMD-12581"/>
<dbReference type="EMDB" id="EMD-12584"/>
<dbReference type="SMR" id="Q9IK92"/>
<dbReference type="DIP" id="DIP-61041N"/>
<dbReference type="IntAct" id="Q9IK92">
    <property type="interactions" value="16"/>
</dbReference>
<dbReference type="MINT" id="Q9IK92"/>
<dbReference type="GeneID" id="920951"/>
<dbReference type="KEGG" id="vg:920951"/>
<dbReference type="OrthoDB" id="3094at10239"/>
<dbReference type="EvolutionaryTrace" id="Q9IK92"/>
<dbReference type="Proteomes" id="UP000002330">
    <property type="component" value="Segment"/>
</dbReference>
<dbReference type="Proteomes" id="UP000007527">
    <property type="component" value="Segment"/>
</dbReference>
<dbReference type="Proteomes" id="UP000008676">
    <property type="component" value="Segment"/>
</dbReference>
<dbReference type="Proteomes" id="UP000100567">
    <property type="component" value="Segment"/>
</dbReference>
<dbReference type="Proteomes" id="UP000110983">
    <property type="component" value="Segment"/>
</dbReference>
<dbReference type="Proteomes" id="UP000130871">
    <property type="component" value="Segment"/>
</dbReference>
<dbReference type="Proteomes" id="UP000170143">
    <property type="component" value="Segment"/>
</dbReference>
<dbReference type="GO" id="GO:0019029">
    <property type="term" value="C:helical viral capsid"/>
    <property type="evidence" value="ECO:0007669"/>
    <property type="project" value="UniProtKB-KW"/>
</dbReference>
<dbReference type="GO" id="GO:0030430">
    <property type="term" value="C:host cell cytoplasm"/>
    <property type="evidence" value="ECO:0007669"/>
    <property type="project" value="UniProtKB-SubCell"/>
</dbReference>
<dbReference type="GO" id="GO:1990904">
    <property type="term" value="C:ribonucleoprotein complex"/>
    <property type="evidence" value="ECO:0007669"/>
    <property type="project" value="UniProtKB-KW"/>
</dbReference>
<dbReference type="GO" id="GO:0019013">
    <property type="term" value="C:viral nucleocapsid"/>
    <property type="evidence" value="ECO:0007669"/>
    <property type="project" value="UniProtKB-KW"/>
</dbReference>
<dbReference type="GO" id="GO:0060090">
    <property type="term" value="F:molecular adaptor activity"/>
    <property type="evidence" value="ECO:0000269"/>
    <property type="project" value="DisProt"/>
</dbReference>
<dbReference type="GO" id="GO:0003723">
    <property type="term" value="F:RNA binding"/>
    <property type="evidence" value="ECO:0007669"/>
    <property type="project" value="UniProtKB-KW"/>
</dbReference>
<dbReference type="GO" id="GO:0005198">
    <property type="term" value="F:structural molecule activity"/>
    <property type="evidence" value="ECO:0007669"/>
    <property type="project" value="InterPro"/>
</dbReference>
<dbReference type="GO" id="GO:0039689">
    <property type="term" value="P:negative stranded viral RNA replication"/>
    <property type="evidence" value="ECO:0000314"/>
    <property type="project" value="UniProtKB"/>
</dbReference>
<dbReference type="GO" id="GO:0039697">
    <property type="term" value="P:negative stranded viral RNA transcription"/>
    <property type="evidence" value="ECO:0000314"/>
    <property type="project" value="UniProtKB"/>
</dbReference>
<dbReference type="DisProt" id="DP00697"/>
<dbReference type="InterPro" id="IPR002021">
    <property type="entry name" value="Paramyx_ncap"/>
</dbReference>
<dbReference type="Pfam" id="PF00973">
    <property type="entry name" value="Paramyxo_ncap"/>
    <property type="match status" value="1"/>
</dbReference>
<evidence type="ECO:0000250" key="1"/>
<evidence type="ECO:0000250" key="2">
    <source>
        <dbReference type="UniProtKB" id="O57286"/>
    </source>
</evidence>
<evidence type="ECO:0000250" key="3">
    <source>
        <dbReference type="UniProtKB" id="P06159"/>
    </source>
</evidence>
<evidence type="ECO:0000250" key="4">
    <source>
        <dbReference type="UniProtKB" id="Q07097"/>
    </source>
</evidence>
<evidence type="ECO:0000256" key="5">
    <source>
        <dbReference type="SAM" id="MobiDB-lite"/>
    </source>
</evidence>
<evidence type="ECO:0000269" key="6">
    <source>
    </source>
</evidence>
<evidence type="ECO:0000269" key="7">
    <source>
    </source>
</evidence>
<evidence type="ECO:0000269" key="8">
    <source>
    </source>
</evidence>
<evidence type="ECO:0000305" key="9"/>
<evidence type="ECO:0000305" key="10">
    <source>
    </source>
</evidence>
<evidence type="ECO:0007744" key="11">
    <source>
        <dbReference type="PDB" id="4CO6"/>
    </source>
</evidence>
<evidence type="ECO:0007744" key="12">
    <source>
        <dbReference type="PDB" id="7NT5"/>
    </source>
</evidence>
<evidence type="ECO:0007744" key="13">
    <source>
        <dbReference type="PDB" id="7NT6"/>
    </source>
</evidence>
<evidence type="ECO:0007744" key="14">
    <source>
        <dbReference type="PDB" id="7PNO"/>
    </source>
</evidence>
<evidence type="ECO:0007829" key="15">
    <source>
        <dbReference type="PDB" id="4CO6"/>
    </source>
</evidence>
<evidence type="ECO:0007829" key="16">
    <source>
        <dbReference type="PDB" id="7NT5"/>
    </source>
</evidence>
<evidence type="ECO:0007829" key="17">
    <source>
        <dbReference type="PDB" id="7PNO"/>
    </source>
</evidence>
<sequence>MSDIFEEAASFRSYQSKLGRDGRASAATATLTTKIRIFVPATNSPELRWELTLFALDVIRSPSAAESMKVGAAFTLISMYSERPGALIRSLLNDPDIEAVIIDVGSMVNGIPVMERRGDKAQEEMEGLMRILKTARDSSKGKTPFVDSRAYGLRITDMSTLVSAVITIEAQIWILIAKAVTAPDTAEESETRRWAKYVQQKRVNPFFALTQQWLTEMRNLLSQSLSVRKFMVEILIEVKKGGSAKGRAVEIISDIGNYVEETGMAGFFATIRFGLETRYPALALNEFQSDLNTIKSLMLLYREIGPRAPYMVLLEESIQTKFAPGGYPLLWSFAMGVATTIDRSMGALNINRGYLEPMYFRLGQKSARHHAGGIDQNMANRLGLSSDQVAELAAAVQETSAGRQESNVQAREAKFAAGGVLIGGSDQDIDEGEEPIEQSGRQSVTFKREMSISSLANSVPSSSVSTSGGTRLTNSLLNLRSRLAAKAAKEAASSNATDDPAISNRTQGESEKKNNQDLKPAQNDLDFVRADV</sequence>
<organism>
    <name type="scientific">Nipah virus</name>
    <dbReference type="NCBI Taxonomy" id="3052225"/>
    <lineage>
        <taxon>Viruses</taxon>
        <taxon>Riboviria</taxon>
        <taxon>Orthornavirae</taxon>
        <taxon>Negarnaviricota</taxon>
        <taxon>Haploviricotina</taxon>
        <taxon>Monjiviricetes</taxon>
        <taxon>Mononegavirales</taxon>
        <taxon>Paramyxoviridae</taxon>
        <taxon>Orthoparamyxovirinae</taxon>
        <taxon>Henipavirus</taxon>
    </lineage>
</organism>